<protein>
    <recommendedName>
        <fullName evidence="1">Ribose-5-phosphate isomerase A</fullName>
        <ecNumber evidence="1">5.3.1.6</ecNumber>
    </recommendedName>
    <alternativeName>
        <fullName evidence="1">Phosphoriboisomerase A</fullName>
        <shortName evidence="1">PRI</shortName>
    </alternativeName>
</protein>
<name>RPIA_HERAR</name>
<accession>A4G433</accession>
<gene>
    <name evidence="1" type="primary">rpiA</name>
    <name type="ordered locus">HEAR1091</name>
</gene>
<proteinExistence type="inferred from homology"/>
<dbReference type="EC" id="5.3.1.6" evidence="1"/>
<dbReference type="EMBL" id="CU207211">
    <property type="protein sequence ID" value="CAL61270.1"/>
    <property type="molecule type" value="Genomic_DNA"/>
</dbReference>
<dbReference type="SMR" id="A4G433"/>
<dbReference type="STRING" id="204773.HEAR1091"/>
<dbReference type="KEGG" id="har:HEAR1091"/>
<dbReference type="eggNOG" id="COG0120">
    <property type="taxonomic scope" value="Bacteria"/>
</dbReference>
<dbReference type="HOGENOM" id="CLU_056590_1_1_4"/>
<dbReference type="OrthoDB" id="5870696at2"/>
<dbReference type="UniPathway" id="UPA00115">
    <property type="reaction ID" value="UER00412"/>
</dbReference>
<dbReference type="Proteomes" id="UP000006697">
    <property type="component" value="Chromosome"/>
</dbReference>
<dbReference type="GO" id="GO:0005829">
    <property type="term" value="C:cytosol"/>
    <property type="evidence" value="ECO:0007669"/>
    <property type="project" value="TreeGrafter"/>
</dbReference>
<dbReference type="GO" id="GO:0004751">
    <property type="term" value="F:ribose-5-phosphate isomerase activity"/>
    <property type="evidence" value="ECO:0007669"/>
    <property type="project" value="UniProtKB-UniRule"/>
</dbReference>
<dbReference type="GO" id="GO:0006014">
    <property type="term" value="P:D-ribose metabolic process"/>
    <property type="evidence" value="ECO:0007669"/>
    <property type="project" value="TreeGrafter"/>
</dbReference>
<dbReference type="GO" id="GO:0009052">
    <property type="term" value="P:pentose-phosphate shunt, non-oxidative branch"/>
    <property type="evidence" value="ECO:0007669"/>
    <property type="project" value="UniProtKB-UniRule"/>
</dbReference>
<dbReference type="CDD" id="cd01398">
    <property type="entry name" value="RPI_A"/>
    <property type="match status" value="1"/>
</dbReference>
<dbReference type="FunFam" id="3.40.50.1360:FF:000001">
    <property type="entry name" value="Ribose-5-phosphate isomerase A"/>
    <property type="match status" value="1"/>
</dbReference>
<dbReference type="Gene3D" id="3.30.70.260">
    <property type="match status" value="1"/>
</dbReference>
<dbReference type="Gene3D" id="3.40.50.1360">
    <property type="match status" value="1"/>
</dbReference>
<dbReference type="HAMAP" id="MF_00170">
    <property type="entry name" value="Rib_5P_isom_A"/>
    <property type="match status" value="1"/>
</dbReference>
<dbReference type="InterPro" id="IPR037171">
    <property type="entry name" value="NagB/RpiA_transferase-like"/>
</dbReference>
<dbReference type="InterPro" id="IPR020672">
    <property type="entry name" value="Ribose5P_isomerase_typA_subgr"/>
</dbReference>
<dbReference type="InterPro" id="IPR004788">
    <property type="entry name" value="Ribose5P_isomerase_type_A"/>
</dbReference>
<dbReference type="NCBIfam" id="NF001924">
    <property type="entry name" value="PRK00702.1"/>
    <property type="match status" value="1"/>
</dbReference>
<dbReference type="NCBIfam" id="TIGR00021">
    <property type="entry name" value="rpiA"/>
    <property type="match status" value="1"/>
</dbReference>
<dbReference type="PANTHER" id="PTHR11934">
    <property type="entry name" value="RIBOSE-5-PHOSPHATE ISOMERASE"/>
    <property type="match status" value="1"/>
</dbReference>
<dbReference type="PANTHER" id="PTHR11934:SF0">
    <property type="entry name" value="RIBOSE-5-PHOSPHATE ISOMERASE"/>
    <property type="match status" value="1"/>
</dbReference>
<dbReference type="Pfam" id="PF06026">
    <property type="entry name" value="Rib_5-P_isom_A"/>
    <property type="match status" value="1"/>
</dbReference>
<dbReference type="SUPFAM" id="SSF75445">
    <property type="entry name" value="D-ribose-5-phosphate isomerase (RpiA), lid domain"/>
    <property type="match status" value="1"/>
</dbReference>
<dbReference type="SUPFAM" id="SSF100950">
    <property type="entry name" value="NagB/RpiA/CoA transferase-like"/>
    <property type="match status" value="1"/>
</dbReference>
<evidence type="ECO:0000255" key="1">
    <source>
        <dbReference type="HAMAP-Rule" id="MF_00170"/>
    </source>
</evidence>
<sequence>MTQDEMKQAVARAAIEYVVPGEIIGVGTGSTANFFIDELGKIKDRIKGAVASSEATAQRLKSHGIAVFDLNEIDAMSVYIDGADEITAQGAMIKGGGAALTREKIVASVAKQFVCIADGSKLVDLLGNFPLPVEVIPMAQAVVARKLAALGGEPRLRLKDGKPLVTDNGCFIIDVLGLKIQDPAELEAQINNIVGVVTVGLFARRGADIALLGTAEGVKRLTF</sequence>
<organism>
    <name type="scientific">Herminiimonas arsenicoxydans</name>
    <dbReference type="NCBI Taxonomy" id="204773"/>
    <lineage>
        <taxon>Bacteria</taxon>
        <taxon>Pseudomonadati</taxon>
        <taxon>Pseudomonadota</taxon>
        <taxon>Betaproteobacteria</taxon>
        <taxon>Burkholderiales</taxon>
        <taxon>Oxalobacteraceae</taxon>
        <taxon>Herminiimonas</taxon>
    </lineage>
</organism>
<reference key="1">
    <citation type="journal article" date="2007" name="PLoS Genet.">
        <title>A tale of two oxidation states: bacterial colonization of arsenic-rich environments.</title>
        <authorList>
            <person name="Muller D."/>
            <person name="Medigue C."/>
            <person name="Koechler S."/>
            <person name="Barbe V."/>
            <person name="Barakat M."/>
            <person name="Talla E."/>
            <person name="Bonnefoy V."/>
            <person name="Krin E."/>
            <person name="Arsene-Ploetze F."/>
            <person name="Carapito C."/>
            <person name="Chandler M."/>
            <person name="Cournoyer B."/>
            <person name="Cruveiller S."/>
            <person name="Dossat C."/>
            <person name="Duval S."/>
            <person name="Heymann M."/>
            <person name="Leize E."/>
            <person name="Lieutaud A."/>
            <person name="Lievremont D."/>
            <person name="Makita Y."/>
            <person name="Mangenot S."/>
            <person name="Nitschke W."/>
            <person name="Ortet P."/>
            <person name="Perdrial N."/>
            <person name="Schoepp B."/>
            <person name="Siguier P."/>
            <person name="Simeonova D.D."/>
            <person name="Rouy Z."/>
            <person name="Segurens B."/>
            <person name="Turlin E."/>
            <person name="Vallenet D."/>
            <person name="van Dorsselaer A."/>
            <person name="Weiss S."/>
            <person name="Weissenbach J."/>
            <person name="Lett M.-C."/>
            <person name="Danchin A."/>
            <person name="Bertin P.N."/>
        </authorList>
    </citation>
    <scope>NUCLEOTIDE SEQUENCE [LARGE SCALE GENOMIC DNA]</scope>
    <source>
        <strain>ULPAs1</strain>
    </source>
</reference>
<comment type="function">
    <text evidence="1">Catalyzes the reversible conversion of ribose-5-phosphate to ribulose 5-phosphate.</text>
</comment>
<comment type="catalytic activity">
    <reaction evidence="1">
        <text>aldehydo-D-ribose 5-phosphate = D-ribulose 5-phosphate</text>
        <dbReference type="Rhea" id="RHEA:14657"/>
        <dbReference type="ChEBI" id="CHEBI:58121"/>
        <dbReference type="ChEBI" id="CHEBI:58273"/>
        <dbReference type="EC" id="5.3.1.6"/>
    </reaction>
</comment>
<comment type="pathway">
    <text evidence="1">Carbohydrate degradation; pentose phosphate pathway; D-ribose 5-phosphate from D-ribulose 5-phosphate (non-oxidative stage): step 1/1.</text>
</comment>
<comment type="subunit">
    <text evidence="1">Homodimer.</text>
</comment>
<comment type="similarity">
    <text evidence="1">Belongs to the ribose 5-phosphate isomerase family.</text>
</comment>
<feature type="chain" id="PRO_1000016933" description="Ribose-5-phosphate isomerase A">
    <location>
        <begin position="1"/>
        <end position="223"/>
    </location>
</feature>
<feature type="active site" description="Proton acceptor" evidence="1">
    <location>
        <position position="103"/>
    </location>
</feature>
<feature type="binding site" evidence="1">
    <location>
        <begin position="28"/>
        <end position="31"/>
    </location>
    <ligand>
        <name>substrate</name>
    </ligand>
</feature>
<feature type="binding site" evidence="1">
    <location>
        <begin position="81"/>
        <end position="84"/>
    </location>
    <ligand>
        <name>substrate</name>
    </ligand>
</feature>
<feature type="binding site" evidence="1">
    <location>
        <begin position="94"/>
        <end position="97"/>
    </location>
    <ligand>
        <name>substrate</name>
    </ligand>
</feature>
<feature type="binding site" evidence="1">
    <location>
        <position position="121"/>
    </location>
    <ligand>
        <name>substrate</name>
    </ligand>
</feature>
<keyword id="KW-0413">Isomerase</keyword>
<keyword id="KW-1185">Reference proteome</keyword>